<proteinExistence type="inferred from homology"/>
<name>PURQ_PYRAE</name>
<feature type="chain" id="PRO_0000100615" description="Phosphoribosylformylglycinamidine synthase subunit PurQ">
    <location>
        <begin position="1"/>
        <end position="212"/>
    </location>
</feature>
<feature type="domain" description="Glutamine amidotransferase type-1" evidence="1">
    <location>
        <begin position="2"/>
        <end position="212"/>
    </location>
</feature>
<feature type="active site" description="Nucleophile" evidence="1">
    <location>
        <position position="85"/>
    </location>
</feature>
<feature type="active site" evidence="1">
    <location>
        <position position="183"/>
    </location>
</feature>
<feature type="active site" evidence="1">
    <location>
        <position position="185"/>
    </location>
</feature>
<feature type="active site" evidence="1">
    <location>
        <position position="191"/>
    </location>
</feature>
<gene>
    <name evidence="1" type="primary">purQ</name>
    <name type="ordered locus">PAE0222</name>
</gene>
<dbReference type="EC" id="6.3.5.3" evidence="1"/>
<dbReference type="EC" id="3.5.1.2" evidence="1"/>
<dbReference type="EMBL" id="AE009441">
    <property type="protein sequence ID" value="AAL62640.1"/>
    <property type="molecule type" value="Genomic_DNA"/>
</dbReference>
<dbReference type="RefSeq" id="WP_011007112.1">
    <property type="nucleotide sequence ID" value="NC_003364.1"/>
</dbReference>
<dbReference type="SMR" id="Q8ZZJ9"/>
<dbReference type="FunCoup" id="Q8ZZJ9">
    <property type="interactions" value="23"/>
</dbReference>
<dbReference type="STRING" id="178306.PAE0222"/>
<dbReference type="EnsemblBacteria" id="AAL62640">
    <property type="protein sequence ID" value="AAL62640"/>
    <property type="gene ID" value="PAE0222"/>
</dbReference>
<dbReference type="GeneID" id="1464858"/>
<dbReference type="KEGG" id="pai:PAE0222"/>
<dbReference type="PATRIC" id="fig|178306.9.peg.162"/>
<dbReference type="eggNOG" id="arCOG00102">
    <property type="taxonomic scope" value="Archaea"/>
</dbReference>
<dbReference type="HOGENOM" id="CLU_001031_3_1_2"/>
<dbReference type="InParanoid" id="Q8ZZJ9"/>
<dbReference type="UniPathway" id="UPA00074">
    <property type="reaction ID" value="UER00128"/>
</dbReference>
<dbReference type="Proteomes" id="UP000002439">
    <property type="component" value="Chromosome"/>
</dbReference>
<dbReference type="GO" id="GO:0005737">
    <property type="term" value="C:cytoplasm"/>
    <property type="evidence" value="ECO:0007669"/>
    <property type="project" value="UniProtKB-SubCell"/>
</dbReference>
<dbReference type="GO" id="GO:0005524">
    <property type="term" value="F:ATP binding"/>
    <property type="evidence" value="ECO:0007669"/>
    <property type="project" value="UniProtKB-KW"/>
</dbReference>
<dbReference type="GO" id="GO:0004359">
    <property type="term" value="F:glutaminase activity"/>
    <property type="evidence" value="ECO:0007669"/>
    <property type="project" value="UniProtKB-EC"/>
</dbReference>
<dbReference type="GO" id="GO:0004642">
    <property type="term" value="F:phosphoribosylformylglycinamidine synthase activity"/>
    <property type="evidence" value="ECO:0007669"/>
    <property type="project" value="UniProtKB-UniRule"/>
</dbReference>
<dbReference type="GO" id="GO:0006189">
    <property type="term" value="P:'de novo' IMP biosynthetic process"/>
    <property type="evidence" value="ECO:0007669"/>
    <property type="project" value="UniProtKB-UniRule"/>
</dbReference>
<dbReference type="CDD" id="cd01740">
    <property type="entry name" value="GATase1_FGAR_AT"/>
    <property type="match status" value="1"/>
</dbReference>
<dbReference type="Gene3D" id="3.40.50.880">
    <property type="match status" value="1"/>
</dbReference>
<dbReference type="HAMAP" id="MF_00421">
    <property type="entry name" value="PurQ"/>
    <property type="match status" value="1"/>
</dbReference>
<dbReference type="InterPro" id="IPR029062">
    <property type="entry name" value="Class_I_gatase-like"/>
</dbReference>
<dbReference type="InterPro" id="IPR010075">
    <property type="entry name" value="PRibForGlyAmidine_synth_PurQ"/>
</dbReference>
<dbReference type="NCBIfam" id="TIGR01737">
    <property type="entry name" value="FGAM_synth_I"/>
    <property type="match status" value="1"/>
</dbReference>
<dbReference type="NCBIfam" id="NF002957">
    <property type="entry name" value="PRK03619.1"/>
    <property type="match status" value="1"/>
</dbReference>
<dbReference type="PANTHER" id="PTHR47552">
    <property type="entry name" value="PHOSPHORIBOSYLFORMYLGLYCINAMIDINE SYNTHASE SUBUNIT PURQ"/>
    <property type="match status" value="1"/>
</dbReference>
<dbReference type="PANTHER" id="PTHR47552:SF1">
    <property type="entry name" value="PHOSPHORIBOSYLFORMYLGLYCINAMIDINE SYNTHASE SUBUNIT PURQ"/>
    <property type="match status" value="1"/>
</dbReference>
<dbReference type="Pfam" id="PF13507">
    <property type="entry name" value="GATase_5"/>
    <property type="match status" value="1"/>
</dbReference>
<dbReference type="PIRSF" id="PIRSF001586">
    <property type="entry name" value="FGAM_synth_I"/>
    <property type="match status" value="1"/>
</dbReference>
<dbReference type="SMART" id="SM01211">
    <property type="entry name" value="GATase_5"/>
    <property type="match status" value="1"/>
</dbReference>
<dbReference type="SUPFAM" id="SSF52317">
    <property type="entry name" value="Class I glutamine amidotransferase-like"/>
    <property type="match status" value="1"/>
</dbReference>
<dbReference type="PROSITE" id="PS51273">
    <property type="entry name" value="GATASE_TYPE_1"/>
    <property type="match status" value="1"/>
</dbReference>
<sequence length="212" mass="23169">MRIAVLKFPGTNGDYDVLRALELAGARGELVWYRDYAAGKYDAVVLAGGFSYGDRLRAGAIAAATKAMDHVREDAERGVPVLGICNGFQILTEAGLLPGALIPNDPPGFISRWVAVRVVDTRTPFTYLYEEGEVVYMPIAHGEGRYVPAGEYKAAFKYVDNPNGSYDNVAGVYEKNVLGLMPHPERAVDPHVSRRGAGGLKLWLGLISWLRR</sequence>
<reference key="1">
    <citation type="journal article" date="2002" name="Proc. Natl. Acad. Sci. U.S.A.">
        <title>Genome sequence of the hyperthermophilic crenarchaeon Pyrobaculum aerophilum.</title>
        <authorList>
            <person name="Fitz-Gibbon S.T."/>
            <person name="Ladner H."/>
            <person name="Kim U.-J."/>
            <person name="Stetter K.O."/>
            <person name="Simon M.I."/>
            <person name="Miller J.H."/>
        </authorList>
    </citation>
    <scope>NUCLEOTIDE SEQUENCE [LARGE SCALE GENOMIC DNA]</scope>
    <source>
        <strain>ATCC 51768 / DSM 7523 / JCM 9630 / CIP 104966 / NBRC 100827 / IM2</strain>
    </source>
</reference>
<evidence type="ECO:0000255" key="1">
    <source>
        <dbReference type="HAMAP-Rule" id="MF_00421"/>
    </source>
</evidence>
<keyword id="KW-0067">ATP-binding</keyword>
<keyword id="KW-0963">Cytoplasm</keyword>
<keyword id="KW-0315">Glutamine amidotransferase</keyword>
<keyword id="KW-0378">Hydrolase</keyword>
<keyword id="KW-0436">Ligase</keyword>
<keyword id="KW-0547">Nucleotide-binding</keyword>
<keyword id="KW-0658">Purine biosynthesis</keyword>
<keyword id="KW-1185">Reference proteome</keyword>
<comment type="function">
    <text evidence="1">Part of the phosphoribosylformylglycinamidine synthase complex involved in the purines biosynthetic pathway. Catalyzes the ATP-dependent conversion of formylglycinamide ribonucleotide (FGAR) and glutamine to yield formylglycinamidine ribonucleotide (FGAM) and glutamate. The FGAM synthase complex is composed of three subunits. PurQ produces an ammonia molecule by converting glutamine to glutamate. PurL transfers the ammonia molecule to FGAR to form FGAM in an ATP-dependent manner. PurS interacts with PurQ and PurL and is thought to assist in the transfer of the ammonia molecule from PurQ to PurL.</text>
</comment>
<comment type="catalytic activity">
    <reaction evidence="1">
        <text>N(2)-formyl-N(1)-(5-phospho-beta-D-ribosyl)glycinamide + L-glutamine + ATP + H2O = 2-formamido-N(1)-(5-O-phospho-beta-D-ribosyl)acetamidine + L-glutamate + ADP + phosphate + H(+)</text>
        <dbReference type="Rhea" id="RHEA:17129"/>
        <dbReference type="ChEBI" id="CHEBI:15377"/>
        <dbReference type="ChEBI" id="CHEBI:15378"/>
        <dbReference type="ChEBI" id="CHEBI:29985"/>
        <dbReference type="ChEBI" id="CHEBI:30616"/>
        <dbReference type="ChEBI" id="CHEBI:43474"/>
        <dbReference type="ChEBI" id="CHEBI:58359"/>
        <dbReference type="ChEBI" id="CHEBI:147286"/>
        <dbReference type="ChEBI" id="CHEBI:147287"/>
        <dbReference type="ChEBI" id="CHEBI:456216"/>
        <dbReference type="EC" id="6.3.5.3"/>
    </reaction>
</comment>
<comment type="catalytic activity">
    <reaction evidence="1">
        <text>L-glutamine + H2O = L-glutamate + NH4(+)</text>
        <dbReference type="Rhea" id="RHEA:15889"/>
        <dbReference type="ChEBI" id="CHEBI:15377"/>
        <dbReference type="ChEBI" id="CHEBI:28938"/>
        <dbReference type="ChEBI" id="CHEBI:29985"/>
        <dbReference type="ChEBI" id="CHEBI:58359"/>
        <dbReference type="EC" id="3.5.1.2"/>
    </reaction>
</comment>
<comment type="pathway">
    <text evidence="1">Purine metabolism; IMP biosynthesis via de novo pathway; 5-amino-1-(5-phospho-D-ribosyl)imidazole from N(2)-formyl-N(1)-(5-phospho-D-ribosyl)glycinamide: step 1/2.</text>
</comment>
<comment type="subunit">
    <text evidence="1">Part of the FGAM synthase complex composed of 1 PurL, 1 PurQ and 2 PurS subunits.</text>
</comment>
<comment type="subcellular location">
    <subcellularLocation>
        <location evidence="1">Cytoplasm</location>
    </subcellularLocation>
</comment>
<protein>
    <recommendedName>
        <fullName evidence="1">Phosphoribosylformylglycinamidine synthase subunit PurQ</fullName>
        <shortName evidence="1">FGAM synthase</shortName>
        <ecNumber evidence="1">6.3.5.3</ecNumber>
    </recommendedName>
    <alternativeName>
        <fullName evidence="1">Formylglycinamide ribonucleotide amidotransferase subunit I</fullName>
        <shortName evidence="1">FGAR amidotransferase I</shortName>
        <shortName evidence="1">FGAR-AT I</shortName>
    </alternativeName>
    <alternativeName>
        <fullName evidence="1">Glutaminase PurQ</fullName>
        <ecNumber evidence="1">3.5.1.2</ecNumber>
    </alternativeName>
    <alternativeName>
        <fullName evidence="1">Phosphoribosylformylglycinamidine synthase subunit I</fullName>
    </alternativeName>
</protein>
<accession>Q8ZZJ9</accession>
<organism>
    <name type="scientific">Pyrobaculum aerophilum (strain ATCC 51768 / DSM 7523 / JCM 9630 / CIP 104966 / NBRC 100827 / IM2)</name>
    <dbReference type="NCBI Taxonomy" id="178306"/>
    <lineage>
        <taxon>Archaea</taxon>
        <taxon>Thermoproteota</taxon>
        <taxon>Thermoprotei</taxon>
        <taxon>Thermoproteales</taxon>
        <taxon>Thermoproteaceae</taxon>
        <taxon>Pyrobaculum</taxon>
    </lineage>
</organism>